<comment type="function">
    <text evidence="1">One of the components of the core complex of photosystem II (PSII). PSII is a light-driven water:plastoquinone oxidoreductase that uses light energy to abstract electrons from H(2)O, generating O(2) and a proton gradient subsequently used for ATP formation. It consists of a core antenna complex that captures photons, and an electron transfer chain that converts photonic excitation into a charge separation.</text>
</comment>
<comment type="subunit">
    <text evidence="1">PSII is composed of 1 copy each of membrane proteins PsbA, PsbB, PsbC, PsbD, PsbE, PsbF, PsbH, PsbI, PsbJ, PsbK, PsbL, PsbM, PsbT, PsbX, PsbY, PsbZ, Psb30/Ycf12, at least 3 peripheral proteins of the oxygen-evolving complex and a large number of cofactors. It forms dimeric complexes.</text>
</comment>
<comment type="subcellular location">
    <subcellularLocation>
        <location evidence="1">Plastid</location>
        <location evidence="1">Chloroplast thylakoid membrane</location>
        <topology evidence="1">Single-pass membrane protein</topology>
    </subcellularLocation>
</comment>
<comment type="similarity">
    <text evidence="1">Belongs to the PsbJ family.</text>
</comment>
<accession>Q49KY4</accession>
<reference key="1">
    <citation type="journal article" date="2005" name="DNA Res.">
        <title>Complete nucleotide sequence of the chloroplast genome from the Tasmanian blue gum, Eucalyptus globulus (Myrtaceae).</title>
        <authorList>
            <person name="Steane D.A."/>
        </authorList>
    </citation>
    <scope>NUCLEOTIDE SEQUENCE [LARGE SCALE GENOMIC DNA]</scope>
</reference>
<sequence length="40" mass="4161">MADTTGRIPLWIIGTVTGILVIGLIGIFFYGSYSGLGSSL</sequence>
<feature type="chain" id="PRO_0000276094" description="Photosystem II reaction center protein J">
    <location>
        <begin position="1"/>
        <end position="40"/>
    </location>
</feature>
<feature type="transmembrane region" description="Helical" evidence="1">
    <location>
        <begin position="8"/>
        <end position="28"/>
    </location>
</feature>
<name>PSBJ_EUCGG</name>
<organism>
    <name type="scientific">Eucalyptus globulus subsp. globulus</name>
    <name type="common">Tasmanian blue gum</name>
    <dbReference type="NCBI Taxonomy" id="71271"/>
    <lineage>
        <taxon>Eukaryota</taxon>
        <taxon>Viridiplantae</taxon>
        <taxon>Streptophyta</taxon>
        <taxon>Embryophyta</taxon>
        <taxon>Tracheophyta</taxon>
        <taxon>Spermatophyta</taxon>
        <taxon>Magnoliopsida</taxon>
        <taxon>eudicotyledons</taxon>
        <taxon>Gunneridae</taxon>
        <taxon>Pentapetalae</taxon>
        <taxon>rosids</taxon>
        <taxon>malvids</taxon>
        <taxon>Myrtales</taxon>
        <taxon>Myrtaceae</taxon>
        <taxon>Myrtoideae</taxon>
        <taxon>Eucalypteae</taxon>
        <taxon>Eucalyptus</taxon>
    </lineage>
</organism>
<gene>
    <name evidence="1" type="primary">psbJ</name>
</gene>
<evidence type="ECO:0000255" key="1">
    <source>
        <dbReference type="HAMAP-Rule" id="MF_01305"/>
    </source>
</evidence>
<proteinExistence type="inferred from homology"/>
<keyword id="KW-0150">Chloroplast</keyword>
<keyword id="KW-0472">Membrane</keyword>
<keyword id="KW-0602">Photosynthesis</keyword>
<keyword id="KW-0604">Photosystem II</keyword>
<keyword id="KW-0934">Plastid</keyword>
<keyword id="KW-0674">Reaction center</keyword>
<keyword id="KW-0793">Thylakoid</keyword>
<keyword id="KW-0812">Transmembrane</keyword>
<keyword id="KW-1133">Transmembrane helix</keyword>
<geneLocation type="chloroplast"/>
<protein>
    <recommendedName>
        <fullName evidence="1">Photosystem II reaction center protein J</fullName>
        <shortName evidence="1">PSII-J</shortName>
    </recommendedName>
</protein>
<dbReference type="EMBL" id="AY780259">
    <property type="protein sequence ID" value="AAX21043.1"/>
    <property type="molecule type" value="Genomic_DNA"/>
</dbReference>
<dbReference type="RefSeq" id="YP_636313.1">
    <property type="nucleotide sequence ID" value="NC_008115.1"/>
</dbReference>
<dbReference type="SMR" id="Q49KY4"/>
<dbReference type="GeneID" id="4108466"/>
<dbReference type="GO" id="GO:0009535">
    <property type="term" value="C:chloroplast thylakoid membrane"/>
    <property type="evidence" value="ECO:0007669"/>
    <property type="project" value="UniProtKB-SubCell"/>
</dbReference>
<dbReference type="GO" id="GO:0009539">
    <property type="term" value="C:photosystem II reaction center"/>
    <property type="evidence" value="ECO:0007669"/>
    <property type="project" value="InterPro"/>
</dbReference>
<dbReference type="GO" id="GO:0015979">
    <property type="term" value="P:photosynthesis"/>
    <property type="evidence" value="ECO:0007669"/>
    <property type="project" value="UniProtKB-UniRule"/>
</dbReference>
<dbReference type="Gene3D" id="6.10.250.2070">
    <property type="match status" value="1"/>
</dbReference>
<dbReference type="HAMAP" id="MF_01305">
    <property type="entry name" value="PSII_PsbJ"/>
    <property type="match status" value="1"/>
</dbReference>
<dbReference type="InterPro" id="IPR002682">
    <property type="entry name" value="PSII_PsbJ"/>
</dbReference>
<dbReference type="InterPro" id="IPR037267">
    <property type="entry name" value="PSII_PsbJ_sf"/>
</dbReference>
<dbReference type="NCBIfam" id="NF002722">
    <property type="entry name" value="PRK02565.1"/>
    <property type="match status" value="1"/>
</dbReference>
<dbReference type="PANTHER" id="PTHR34812">
    <property type="entry name" value="PHOTOSYSTEM II REACTION CENTER PROTEIN J"/>
    <property type="match status" value="1"/>
</dbReference>
<dbReference type="PANTHER" id="PTHR34812:SF3">
    <property type="entry name" value="PHOTOSYSTEM II REACTION CENTER PROTEIN J"/>
    <property type="match status" value="1"/>
</dbReference>
<dbReference type="Pfam" id="PF01788">
    <property type="entry name" value="PsbJ"/>
    <property type="match status" value="1"/>
</dbReference>
<dbReference type="SUPFAM" id="SSF161021">
    <property type="entry name" value="Photosystem II reaction center protein J, PsbJ"/>
    <property type="match status" value="1"/>
</dbReference>